<proteinExistence type="inferred from homology"/>
<sequence length="360" mass="40298">MKKYLALALIAPLLVSCSSSNKKGTEYNEAWVKDTNGFDILMGQFAHNIENIWGYNEVLLAGPKDYVKYTDQYQTRSHINFDAGTITVETIAGTDPRGRLRQAIIKTLLMGDDPNSIDLYSDVDDIQISKEPFLYGQVVDNTGASIRWEWRAARYADYLLQTRLKSRNNGLRVIYSITINLVPNHLDKRAHKYLGMVRQASRKYGVDESLILAIMQTESSFNPYAVSHADAMGLMQVVQHSAGKDVFRSQGKSGLPSRSYLFDPANNIDTGTAYLAMLNNVYLAGIDNPTSRRYAVITAYNGGAGSVLRVFSSDKVQAANIINSMAPGDVYQTLTTRHPSAESRRYLYKVNTAQKSYRRK</sequence>
<gene>
    <name evidence="1" type="primary">mltC</name>
    <name type="ordered locus">KPK_0714</name>
</gene>
<evidence type="ECO:0000255" key="1">
    <source>
        <dbReference type="HAMAP-Rule" id="MF_01616"/>
    </source>
</evidence>
<protein>
    <recommendedName>
        <fullName evidence="1">Membrane-bound lytic murein transglycosylase C</fullName>
        <ecNumber evidence="1">4.2.2.n1</ecNumber>
    </recommendedName>
    <alternativeName>
        <fullName evidence="1">Murein lyase C</fullName>
    </alternativeName>
</protein>
<dbReference type="EC" id="4.2.2.n1" evidence="1"/>
<dbReference type="EMBL" id="CP000964">
    <property type="protein sequence ID" value="ACI09621.1"/>
    <property type="molecule type" value="Genomic_DNA"/>
</dbReference>
<dbReference type="SMR" id="B5XU88"/>
<dbReference type="CAZy" id="GH23">
    <property type="family name" value="Glycoside Hydrolase Family 23"/>
</dbReference>
<dbReference type="KEGG" id="kpe:KPK_0714"/>
<dbReference type="HOGENOM" id="CLU_044583_0_0_6"/>
<dbReference type="Proteomes" id="UP000001734">
    <property type="component" value="Chromosome"/>
</dbReference>
<dbReference type="GO" id="GO:0009279">
    <property type="term" value="C:cell outer membrane"/>
    <property type="evidence" value="ECO:0007669"/>
    <property type="project" value="UniProtKB-SubCell"/>
</dbReference>
<dbReference type="GO" id="GO:0016798">
    <property type="term" value="F:hydrolase activity, acting on glycosyl bonds"/>
    <property type="evidence" value="ECO:0007669"/>
    <property type="project" value="InterPro"/>
</dbReference>
<dbReference type="GO" id="GO:0008933">
    <property type="term" value="F:peptidoglycan lytic transglycosylase activity"/>
    <property type="evidence" value="ECO:0007669"/>
    <property type="project" value="UniProtKB-UniRule"/>
</dbReference>
<dbReference type="GO" id="GO:0016998">
    <property type="term" value="P:cell wall macromolecule catabolic process"/>
    <property type="evidence" value="ECO:0007669"/>
    <property type="project" value="UniProtKB-UniRule"/>
</dbReference>
<dbReference type="GO" id="GO:0071555">
    <property type="term" value="P:cell wall organization"/>
    <property type="evidence" value="ECO:0007669"/>
    <property type="project" value="UniProtKB-KW"/>
</dbReference>
<dbReference type="GO" id="GO:0000270">
    <property type="term" value="P:peptidoglycan metabolic process"/>
    <property type="evidence" value="ECO:0007669"/>
    <property type="project" value="InterPro"/>
</dbReference>
<dbReference type="CDD" id="cd16893">
    <property type="entry name" value="LT_MltC_MltE"/>
    <property type="match status" value="1"/>
</dbReference>
<dbReference type="FunFam" id="1.10.530.10:FF:000002">
    <property type="entry name" value="Membrane-bound lytic murein transglycosylase C"/>
    <property type="match status" value="1"/>
</dbReference>
<dbReference type="Gene3D" id="1.10.530.10">
    <property type="match status" value="1"/>
</dbReference>
<dbReference type="HAMAP" id="MF_01616">
    <property type="entry name" value="MltC"/>
    <property type="match status" value="1"/>
</dbReference>
<dbReference type="InterPro" id="IPR023346">
    <property type="entry name" value="Lysozyme-like_dom_sf"/>
</dbReference>
<dbReference type="InterPro" id="IPR023664">
    <property type="entry name" value="Murein_transglycosylaseC"/>
</dbReference>
<dbReference type="InterPro" id="IPR024570">
    <property type="entry name" value="Murein_transglycosylaseC_N"/>
</dbReference>
<dbReference type="InterPro" id="IPR000189">
    <property type="entry name" value="Transglyc_AS"/>
</dbReference>
<dbReference type="InterPro" id="IPR008258">
    <property type="entry name" value="Transglycosylase_SLT_dom_1"/>
</dbReference>
<dbReference type="NCBIfam" id="NF008670">
    <property type="entry name" value="PRK11671.1"/>
    <property type="match status" value="1"/>
</dbReference>
<dbReference type="PANTHER" id="PTHR37423:SF2">
    <property type="entry name" value="MEMBRANE-BOUND LYTIC MUREIN TRANSGLYCOSYLASE C"/>
    <property type="match status" value="1"/>
</dbReference>
<dbReference type="PANTHER" id="PTHR37423">
    <property type="entry name" value="SOLUBLE LYTIC MUREIN TRANSGLYCOSYLASE-RELATED"/>
    <property type="match status" value="1"/>
</dbReference>
<dbReference type="Pfam" id="PF11873">
    <property type="entry name" value="Mltc_N"/>
    <property type="match status" value="1"/>
</dbReference>
<dbReference type="Pfam" id="PF01464">
    <property type="entry name" value="SLT"/>
    <property type="match status" value="1"/>
</dbReference>
<dbReference type="SUPFAM" id="SSF53955">
    <property type="entry name" value="Lysozyme-like"/>
    <property type="match status" value="1"/>
</dbReference>
<dbReference type="PROSITE" id="PS51257">
    <property type="entry name" value="PROKAR_LIPOPROTEIN"/>
    <property type="match status" value="1"/>
</dbReference>
<dbReference type="PROSITE" id="PS00922">
    <property type="entry name" value="TRANSGLYCOSYLASE"/>
    <property type="match status" value="1"/>
</dbReference>
<accession>B5XU88</accession>
<comment type="function">
    <text evidence="1">Murein-degrading enzyme. May play a role in recycling of muropeptides during cell elongation and/or cell division.</text>
</comment>
<comment type="catalytic activity">
    <reaction evidence="1">
        <text>Exolytic cleavage of the (1-&gt;4)-beta-glycosidic linkage between N-acetylmuramic acid (MurNAc) and N-acetylglucosamine (GlcNAc) residues in peptidoglycan, from either the reducing or the non-reducing ends of the peptidoglycan chains, with concomitant formation of a 1,6-anhydrobond in the MurNAc residue.</text>
        <dbReference type="EC" id="4.2.2.n1"/>
    </reaction>
</comment>
<comment type="subcellular location">
    <subcellularLocation>
        <location evidence="1">Cell outer membrane</location>
        <topology evidence="1">Lipid-anchor</topology>
    </subcellularLocation>
</comment>
<comment type="similarity">
    <text evidence="1">Belongs to the transglycosylase Slt family.</text>
</comment>
<reference key="1">
    <citation type="journal article" date="2008" name="PLoS Genet.">
        <title>Complete genome sequence of the N2-fixing broad host range endophyte Klebsiella pneumoniae 342 and virulence predictions verified in mice.</title>
        <authorList>
            <person name="Fouts D.E."/>
            <person name="Tyler H.L."/>
            <person name="DeBoy R.T."/>
            <person name="Daugherty S."/>
            <person name="Ren Q."/>
            <person name="Badger J.H."/>
            <person name="Durkin A.S."/>
            <person name="Huot H."/>
            <person name="Shrivastava S."/>
            <person name="Kothari S."/>
            <person name="Dodson R.J."/>
            <person name="Mohamoud Y."/>
            <person name="Khouri H."/>
            <person name="Roesch L.F.W."/>
            <person name="Krogfelt K.A."/>
            <person name="Struve C."/>
            <person name="Triplett E.W."/>
            <person name="Methe B.A."/>
        </authorList>
    </citation>
    <scope>NUCLEOTIDE SEQUENCE [LARGE SCALE GENOMIC DNA]</scope>
    <source>
        <strain>342</strain>
    </source>
</reference>
<name>MLTC_KLEP3</name>
<keyword id="KW-0998">Cell outer membrane</keyword>
<keyword id="KW-0961">Cell wall biogenesis/degradation</keyword>
<keyword id="KW-0449">Lipoprotein</keyword>
<keyword id="KW-0456">Lyase</keyword>
<keyword id="KW-0472">Membrane</keyword>
<keyword id="KW-0564">Palmitate</keyword>
<keyword id="KW-0732">Signal</keyword>
<organism>
    <name type="scientific">Klebsiella pneumoniae (strain 342)</name>
    <dbReference type="NCBI Taxonomy" id="507522"/>
    <lineage>
        <taxon>Bacteria</taxon>
        <taxon>Pseudomonadati</taxon>
        <taxon>Pseudomonadota</taxon>
        <taxon>Gammaproteobacteria</taxon>
        <taxon>Enterobacterales</taxon>
        <taxon>Enterobacteriaceae</taxon>
        <taxon>Klebsiella/Raoultella group</taxon>
        <taxon>Klebsiella</taxon>
        <taxon>Klebsiella pneumoniae complex</taxon>
    </lineage>
</organism>
<feature type="signal peptide" evidence="1">
    <location>
        <begin position="1"/>
        <end position="16"/>
    </location>
</feature>
<feature type="chain" id="PRO_1000185930" description="Membrane-bound lytic murein transglycosylase C">
    <location>
        <begin position="17"/>
        <end position="360"/>
    </location>
</feature>
<feature type="lipid moiety-binding region" description="N-palmitoyl cysteine" evidence="1">
    <location>
        <position position="17"/>
    </location>
</feature>
<feature type="lipid moiety-binding region" description="S-diacylglycerol cysteine" evidence="1">
    <location>
        <position position="17"/>
    </location>
</feature>